<feature type="chain" id="PRO_1000164539" description="Cell division protein SepF">
    <location>
        <begin position="1"/>
        <end position="167"/>
    </location>
</feature>
<feature type="region of interest" description="Disordered" evidence="2">
    <location>
        <begin position="25"/>
        <end position="64"/>
    </location>
</feature>
<feature type="compositionally biased region" description="Basic residues" evidence="2">
    <location>
        <begin position="39"/>
        <end position="51"/>
    </location>
</feature>
<proteinExistence type="inferred from homology"/>
<accession>B2A2I4</accession>
<evidence type="ECO:0000255" key="1">
    <source>
        <dbReference type="HAMAP-Rule" id="MF_01197"/>
    </source>
</evidence>
<evidence type="ECO:0000256" key="2">
    <source>
        <dbReference type="SAM" id="MobiDB-lite"/>
    </source>
</evidence>
<sequence length="167" mass="18886">MNFFEKILVFLGLAEEAEEEIIEDEEDVAPVNNSTFQEKKHKKRSAVQRKQKNSDQEGDSVVPLHSTKNTQGIKIHLIAPSKYEEAQEIGKYLKSGFPVVVNLEQLEMETAKQMIDFVSGTVFALDGNLHKIGQQIFLFSPPNVGIDGAIDTTGDEFFDQKTYEEYE</sequence>
<keyword id="KW-0131">Cell cycle</keyword>
<keyword id="KW-0132">Cell division</keyword>
<keyword id="KW-0963">Cytoplasm</keyword>
<keyword id="KW-1185">Reference proteome</keyword>
<keyword id="KW-0717">Septation</keyword>
<organism>
    <name type="scientific">Natranaerobius thermophilus (strain ATCC BAA-1301 / DSM 18059 / JW/NM-WN-LF)</name>
    <dbReference type="NCBI Taxonomy" id="457570"/>
    <lineage>
        <taxon>Bacteria</taxon>
        <taxon>Bacillati</taxon>
        <taxon>Bacillota</taxon>
        <taxon>Clostridia</taxon>
        <taxon>Natranaerobiales</taxon>
        <taxon>Natranaerobiaceae</taxon>
        <taxon>Natranaerobius</taxon>
    </lineage>
</organism>
<dbReference type="EMBL" id="CP001034">
    <property type="protein sequence ID" value="ACB84899.1"/>
    <property type="molecule type" value="Genomic_DNA"/>
</dbReference>
<dbReference type="RefSeq" id="WP_012447774.1">
    <property type="nucleotide sequence ID" value="NC_010718.1"/>
</dbReference>
<dbReference type="SMR" id="B2A2I4"/>
<dbReference type="FunCoup" id="B2A2I4">
    <property type="interactions" value="14"/>
</dbReference>
<dbReference type="STRING" id="457570.Nther_1316"/>
<dbReference type="KEGG" id="nth:Nther_1316"/>
<dbReference type="eggNOG" id="COG1799">
    <property type="taxonomic scope" value="Bacteria"/>
</dbReference>
<dbReference type="HOGENOM" id="CLU_078499_4_1_9"/>
<dbReference type="InParanoid" id="B2A2I4"/>
<dbReference type="OrthoDB" id="9815206at2"/>
<dbReference type="Proteomes" id="UP000001683">
    <property type="component" value="Chromosome"/>
</dbReference>
<dbReference type="GO" id="GO:0005737">
    <property type="term" value="C:cytoplasm"/>
    <property type="evidence" value="ECO:0007669"/>
    <property type="project" value="UniProtKB-SubCell"/>
</dbReference>
<dbReference type="GO" id="GO:0000917">
    <property type="term" value="P:division septum assembly"/>
    <property type="evidence" value="ECO:0007669"/>
    <property type="project" value="UniProtKB-KW"/>
</dbReference>
<dbReference type="GO" id="GO:0043093">
    <property type="term" value="P:FtsZ-dependent cytokinesis"/>
    <property type="evidence" value="ECO:0007669"/>
    <property type="project" value="UniProtKB-UniRule"/>
</dbReference>
<dbReference type="Gene3D" id="3.30.110.150">
    <property type="entry name" value="SepF-like protein"/>
    <property type="match status" value="1"/>
</dbReference>
<dbReference type="HAMAP" id="MF_01197">
    <property type="entry name" value="SepF"/>
    <property type="match status" value="1"/>
</dbReference>
<dbReference type="InterPro" id="IPR023052">
    <property type="entry name" value="Cell_div_SepF"/>
</dbReference>
<dbReference type="InterPro" id="IPR007561">
    <property type="entry name" value="Cell_div_SepF/SepF-rel"/>
</dbReference>
<dbReference type="InterPro" id="IPR038594">
    <property type="entry name" value="SepF-like_sf"/>
</dbReference>
<dbReference type="PANTHER" id="PTHR35798">
    <property type="entry name" value="CELL DIVISION PROTEIN SEPF"/>
    <property type="match status" value="1"/>
</dbReference>
<dbReference type="PANTHER" id="PTHR35798:SF1">
    <property type="entry name" value="CELL DIVISION PROTEIN SEPF"/>
    <property type="match status" value="1"/>
</dbReference>
<dbReference type="Pfam" id="PF04472">
    <property type="entry name" value="SepF"/>
    <property type="match status" value="1"/>
</dbReference>
<gene>
    <name evidence="1" type="primary">sepF</name>
    <name type="ordered locus">Nther_1316</name>
</gene>
<name>SEPF_NATTJ</name>
<reference key="1">
    <citation type="submission" date="2008-04" db="EMBL/GenBank/DDBJ databases">
        <title>Complete sequence of chromosome of Natranaerobius thermophilus JW/NM-WN-LF.</title>
        <authorList>
            <consortium name="US DOE Joint Genome Institute"/>
            <person name="Copeland A."/>
            <person name="Lucas S."/>
            <person name="Lapidus A."/>
            <person name="Glavina del Rio T."/>
            <person name="Dalin E."/>
            <person name="Tice H."/>
            <person name="Bruce D."/>
            <person name="Goodwin L."/>
            <person name="Pitluck S."/>
            <person name="Chertkov O."/>
            <person name="Brettin T."/>
            <person name="Detter J.C."/>
            <person name="Han C."/>
            <person name="Kuske C.R."/>
            <person name="Schmutz J."/>
            <person name="Larimer F."/>
            <person name="Land M."/>
            <person name="Hauser L."/>
            <person name="Kyrpides N."/>
            <person name="Lykidis A."/>
            <person name="Mesbah N.M."/>
            <person name="Wiegel J."/>
        </authorList>
    </citation>
    <scope>NUCLEOTIDE SEQUENCE [LARGE SCALE GENOMIC DNA]</scope>
    <source>
        <strain>ATCC BAA-1301 / DSM 18059 / JW/NM-WN-LF</strain>
    </source>
</reference>
<comment type="function">
    <text evidence="1">Cell division protein that is part of the divisome complex and is recruited early to the Z-ring. Probably stimulates Z-ring formation, perhaps through the cross-linking of FtsZ protofilaments. Its function overlaps with FtsA.</text>
</comment>
<comment type="subunit">
    <text evidence="1">Homodimer. Interacts with FtsZ.</text>
</comment>
<comment type="subcellular location">
    <subcellularLocation>
        <location evidence="1">Cytoplasm</location>
    </subcellularLocation>
    <text evidence="1">Localizes to the division site, in a FtsZ-dependent manner.</text>
</comment>
<comment type="similarity">
    <text evidence="1">Belongs to the SepF family.</text>
</comment>
<protein>
    <recommendedName>
        <fullName evidence="1">Cell division protein SepF</fullName>
    </recommendedName>
</protein>